<name>HDA10_RAT</name>
<organism>
    <name type="scientific">Rattus norvegicus</name>
    <name type="common">Rat</name>
    <dbReference type="NCBI Taxonomy" id="10116"/>
    <lineage>
        <taxon>Eukaryota</taxon>
        <taxon>Metazoa</taxon>
        <taxon>Chordata</taxon>
        <taxon>Craniata</taxon>
        <taxon>Vertebrata</taxon>
        <taxon>Euteleostomi</taxon>
        <taxon>Mammalia</taxon>
        <taxon>Eutheria</taxon>
        <taxon>Euarchontoglires</taxon>
        <taxon>Glires</taxon>
        <taxon>Rodentia</taxon>
        <taxon>Myomorpha</taxon>
        <taxon>Muroidea</taxon>
        <taxon>Muridae</taxon>
        <taxon>Murinae</taxon>
        <taxon>Rattus</taxon>
    </lineage>
</organism>
<proteinExistence type="evidence at transcript level"/>
<evidence type="ECO:0000250" key="1"/>
<evidence type="ECO:0000250" key="2">
    <source>
        <dbReference type="UniProtKB" id="Q969S8"/>
    </source>
</evidence>
<evidence type="ECO:0000305" key="3"/>
<keyword id="KW-0072">Autophagy</keyword>
<keyword id="KW-0963">Cytoplasm</keyword>
<keyword id="KW-0227">DNA damage</keyword>
<keyword id="KW-0233">DNA recombination</keyword>
<keyword id="KW-0234">DNA repair</keyword>
<keyword id="KW-0378">Hydrolase</keyword>
<keyword id="KW-0479">Metal-binding</keyword>
<keyword id="KW-0539">Nucleus</keyword>
<keyword id="KW-0597">Phosphoprotein</keyword>
<keyword id="KW-1185">Reference proteome</keyword>
<keyword id="KW-0862">Zinc</keyword>
<dbReference type="EC" id="3.5.1.48" evidence="2"/>
<dbReference type="EC" id="3.5.1.62" evidence="2"/>
<dbReference type="EMBL" id="BC092573">
    <property type="protein sequence ID" value="AAH92573.1"/>
    <property type="molecule type" value="mRNA"/>
</dbReference>
<dbReference type="RefSeq" id="NP_001030172.1">
    <property type="nucleotide sequence ID" value="NM_001035000.2"/>
</dbReference>
<dbReference type="SMR" id="Q569C4"/>
<dbReference type="BioGRID" id="263876">
    <property type="interactions" value="1"/>
</dbReference>
<dbReference type="FunCoup" id="Q569C4">
    <property type="interactions" value="318"/>
</dbReference>
<dbReference type="STRING" id="10116.ENSRNOP00000052717"/>
<dbReference type="PhosphoSitePlus" id="Q569C4"/>
<dbReference type="PaxDb" id="10116-ENSRNOP00000052717"/>
<dbReference type="Ensembl" id="ENSRNOT00000055865.4">
    <property type="protein sequence ID" value="ENSRNOP00000052717.2"/>
    <property type="gene ID" value="ENSRNOG00000031915.5"/>
</dbReference>
<dbReference type="GeneID" id="362981"/>
<dbReference type="KEGG" id="rno:362981"/>
<dbReference type="AGR" id="RGD:1305874"/>
<dbReference type="CTD" id="83933"/>
<dbReference type="RGD" id="1305874">
    <property type="gene designation" value="Hdac10"/>
</dbReference>
<dbReference type="eggNOG" id="KOG1343">
    <property type="taxonomic scope" value="Eukaryota"/>
</dbReference>
<dbReference type="GeneTree" id="ENSGT00940000160061"/>
<dbReference type="HOGENOM" id="CLU_007727_6_0_1"/>
<dbReference type="InParanoid" id="Q569C4"/>
<dbReference type="Reactome" id="R-RNO-350054">
    <property type="pathway name" value="Notch-HLH transcription pathway"/>
</dbReference>
<dbReference type="PRO" id="PR:Q569C4"/>
<dbReference type="Proteomes" id="UP000002494">
    <property type="component" value="Chromosome 7"/>
</dbReference>
<dbReference type="Bgee" id="ENSRNOG00000031915">
    <property type="expression patterns" value="Expressed in pancreas and 19 other cell types or tissues"/>
</dbReference>
<dbReference type="GO" id="GO:0005737">
    <property type="term" value="C:cytoplasm"/>
    <property type="evidence" value="ECO:0000266"/>
    <property type="project" value="RGD"/>
</dbReference>
<dbReference type="GO" id="GO:0000118">
    <property type="term" value="C:histone deacetylase complex"/>
    <property type="evidence" value="ECO:0000266"/>
    <property type="project" value="RGD"/>
</dbReference>
<dbReference type="GO" id="GO:0005654">
    <property type="term" value="C:nucleoplasm"/>
    <property type="evidence" value="ECO:0000266"/>
    <property type="project" value="RGD"/>
</dbReference>
<dbReference type="GO" id="GO:0005634">
    <property type="term" value="C:nucleus"/>
    <property type="evidence" value="ECO:0000266"/>
    <property type="project" value="RGD"/>
</dbReference>
<dbReference type="GO" id="GO:0047609">
    <property type="term" value="F:acetylputrescine deacetylase activity"/>
    <property type="evidence" value="ECO:0007669"/>
    <property type="project" value="UniProtKB-EC"/>
</dbReference>
<dbReference type="GO" id="GO:0047611">
    <property type="term" value="F:acetylspermidine deacetylase activity"/>
    <property type="evidence" value="ECO:0007669"/>
    <property type="project" value="UniProtKB-EC"/>
</dbReference>
<dbReference type="GO" id="GO:0019213">
    <property type="term" value="F:deacetylase activity"/>
    <property type="evidence" value="ECO:0000250"/>
    <property type="project" value="UniProtKB"/>
</dbReference>
<dbReference type="GO" id="GO:0019899">
    <property type="term" value="F:enzyme binding"/>
    <property type="evidence" value="ECO:0000266"/>
    <property type="project" value="RGD"/>
</dbReference>
<dbReference type="GO" id="GO:0004407">
    <property type="term" value="F:histone deacetylase activity"/>
    <property type="evidence" value="ECO:0000266"/>
    <property type="project" value="RGD"/>
</dbReference>
<dbReference type="GO" id="GO:0042826">
    <property type="term" value="F:histone deacetylase binding"/>
    <property type="evidence" value="ECO:0000266"/>
    <property type="project" value="RGD"/>
</dbReference>
<dbReference type="GO" id="GO:0033558">
    <property type="term" value="F:protein lysine deacetylase activity"/>
    <property type="evidence" value="ECO:0000266"/>
    <property type="project" value="RGD"/>
</dbReference>
<dbReference type="GO" id="GO:0008270">
    <property type="term" value="F:zinc ion binding"/>
    <property type="evidence" value="ECO:0000250"/>
    <property type="project" value="UniProtKB"/>
</dbReference>
<dbReference type="GO" id="GO:0006281">
    <property type="term" value="P:DNA repair"/>
    <property type="evidence" value="ECO:0007669"/>
    <property type="project" value="UniProtKB-KW"/>
</dbReference>
<dbReference type="GO" id="GO:0040029">
    <property type="term" value="P:epigenetic regulation of gene expression"/>
    <property type="evidence" value="ECO:0000318"/>
    <property type="project" value="GO_Central"/>
</dbReference>
<dbReference type="GO" id="GO:0035825">
    <property type="term" value="P:homologous recombination"/>
    <property type="evidence" value="ECO:0000250"/>
    <property type="project" value="UniProtKB"/>
</dbReference>
<dbReference type="GO" id="GO:0016236">
    <property type="term" value="P:macroautophagy"/>
    <property type="evidence" value="ECO:0000250"/>
    <property type="project" value="UniProtKB"/>
</dbReference>
<dbReference type="GO" id="GO:0045892">
    <property type="term" value="P:negative regulation of DNA-templated transcription"/>
    <property type="evidence" value="ECO:0000266"/>
    <property type="project" value="RGD"/>
</dbReference>
<dbReference type="GO" id="GO:0000122">
    <property type="term" value="P:negative regulation of transcription by RNA polymerase II"/>
    <property type="evidence" value="ECO:0000266"/>
    <property type="project" value="RGD"/>
</dbReference>
<dbReference type="GO" id="GO:0014003">
    <property type="term" value="P:oligodendrocyte development"/>
    <property type="evidence" value="ECO:0000270"/>
    <property type="project" value="RGD"/>
</dbReference>
<dbReference type="GO" id="GO:0106047">
    <property type="term" value="P:polyamine deacetylation"/>
    <property type="evidence" value="ECO:0000250"/>
    <property type="project" value="UniProtKB"/>
</dbReference>
<dbReference type="GO" id="GO:0032425">
    <property type="term" value="P:positive regulation of mismatch repair"/>
    <property type="evidence" value="ECO:0000250"/>
    <property type="project" value="UniProtKB"/>
</dbReference>
<dbReference type="GO" id="GO:0006355">
    <property type="term" value="P:regulation of DNA-templated transcription"/>
    <property type="evidence" value="ECO:0000266"/>
    <property type="project" value="RGD"/>
</dbReference>
<dbReference type="GO" id="GO:0106048">
    <property type="term" value="P:spermidine deacetylation"/>
    <property type="evidence" value="ECO:0000250"/>
    <property type="project" value="UniProtKB"/>
</dbReference>
<dbReference type="FunFam" id="3.40.800.20:FF:000005">
    <property type="entry name" value="histone deacetylase 6"/>
    <property type="match status" value="1"/>
</dbReference>
<dbReference type="Gene3D" id="3.40.800.20">
    <property type="entry name" value="Histone deacetylase domain"/>
    <property type="match status" value="1"/>
</dbReference>
<dbReference type="InterPro" id="IPR050284">
    <property type="entry name" value="HDAC_PDAC"/>
</dbReference>
<dbReference type="InterPro" id="IPR000286">
    <property type="entry name" value="His_deacetylse"/>
</dbReference>
<dbReference type="InterPro" id="IPR023801">
    <property type="entry name" value="His_deacetylse_dom"/>
</dbReference>
<dbReference type="InterPro" id="IPR037138">
    <property type="entry name" value="His_deacetylse_dom_sf"/>
</dbReference>
<dbReference type="InterPro" id="IPR023696">
    <property type="entry name" value="Ureohydrolase_dom_sf"/>
</dbReference>
<dbReference type="PANTHER" id="PTHR10625">
    <property type="entry name" value="HISTONE DEACETYLASE HDAC1-RELATED"/>
    <property type="match status" value="1"/>
</dbReference>
<dbReference type="PANTHER" id="PTHR10625:SF43">
    <property type="entry name" value="POLYAMINE DEACETYLASE HDAC10"/>
    <property type="match status" value="1"/>
</dbReference>
<dbReference type="Pfam" id="PF00850">
    <property type="entry name" value="Hist_deacetyl"/>
    <property type="match status" value="1"/>
</dbReference>
<dbReference type="PRINTS" id="PR01270">
    <property type="entry name" value="HDASUPER"/>
</dbReference>
<dbReference type="SUPFAM" id="SSF52768">
    <property type="entry name" value="Arginase/deacetylase"/>
    <property type="match status" value="2"/>
</dbReference>
<feature type="chain" id="PRO_0000114714" description="Polyamine deacetylase HDAC10">
    <location>
        <begin position="1"/>
        <end position="588"/>
    </location>
</feature>
<feature type="region of interest" description="Histone deacetylase">
    <location>
        <begin position="1"/>
        <end position="302"/>
    </location>
</feature>
<feature type="active site" evidence="1">
    <location>
        <position position="135"/>
    </location>
</feature>
<gene>
    <name type="primary">Hdac10</name>
</gene>
<accession>Q569C4</accession>
<protein>
    <recommendedName>
        <fullName>Polyamine deacetylase HDAC10</fullName>
        <ecNumber evidence="2">3.5.1.48</ecNumber>
        <ecNumber evidence="2">3.5.1.62</ecNumber>
    </recommendedName>
    <alternativeName>
        <fullName>Histone deacetylase 10</fullName>
        <shortName>HD10</shortName>
    </alternativeName>
</protein>
<sequence>MGTALVYHEDMTATRLLWDDPECEIECPERLTAALDGLRQRGLEERCQCLSVCEASEEELGLVHSPEYIALVQKTQTLDKEELHTLSKQYDAVYFHPDTFHCARLAAGAALRLVDAVLTGAVHNGVALVRPPGHHSQRAAANGFCVFNNVAIAARHAKQKYGLQRILIVDWDVHHGQGIQYIFEDDPSVLYFSWHRYEHGNFWPFLPESDADTVGRGRGQGFTVNLPWNQVGMGNADYLAAFLHVLLPLAFEFDPELVLVSAGFDSAIGDPEGQMQATPECFAHLTQLLQVLAGGRICAVLECPGVYPECSDSPDPSLDKPPTNSTCTVAEDSLSPCLDRPCHRPTPPICIAVALAVSGAALDLPPGVLHQEGSALREETEAWARLHKSQFQDDDLAALGKSLCLLDGILDGQIRSAIATTTALATAATLGVLIQRCVAHRGQRRILWLSIRGKEADIWSMFHFSTPLPQTTGGFLSFILGLVLPLAYGFQPDMVLMALGPAHGLQNAQAALLAAMLRSPVGGRILALVEEESILQLARTLAQVLHGETPPSLGPFSMASPEEIQALMFLKAQLEPRWKLLQVAAPPP</sequence>
<reference key="1">
    <citation type="journal article" date="2004" name="Genome Res.">
        <title>The status, quality, and expansion of the NIH full-length cDNA project: the Mammalian Gene Collection (MGC).</title>
        <authorList>
            <consortium name="The MGC Project Team"/>
        </authorList>
    </citation>
    <scope>NUCLEOTIDE SEQUENCE [LARGE SCALE MRNA]</scope>
    <source>
        <tissue>Liver</tissue>
    </source>
</reference>
<comment type="function">
    <text evidence="2">Polyamine deacetylase (PDAC), which acts preferentially on N(8)-acetylspermidine, and also on acetylcadaverine and acetylputrescine. Exhibits attenuated catalytic activity toward N(1),N(8)-diacetylspermidine and very low activity, if any, toward N(1)-acetylspermidine. Histone deacetylase activity has been observed in vitro. Has also been shown to be involved in MSH2 deacetylation. The physiological relevance of protein/histone deacetylase activity is unclear and could be very weak. May play a role in the promotion of late stages of autophagy, possibly autophagosome-lysosome fusion and/or lysosomal exocytosis in neuroblastoma cells. May play a role in homologous recombination. May promote DNA mismatch repair.</text>
</comment>
<comment type="catalytic activity">
    <reaction evidence="2">
        <text>N(8)-acetylspermidine + H2O = spermidine + acetate</text>
        <dbReference type="Rhea" id="RHEA:23928"/>
        <dbReference type="ChEBI" id="CHEBI:15377"/>
        <dbReference type="ChEBI" id="CHEBI:30089"/>
        <dbReference type="ChEBI" id="CHEBI:57834"/>
        <dbReference type="ChEBI" id="CHEBI:58535"/>
        <dbReference type="EC" id="3.5.1.48"/>
    </reaction>
</comment>
<comment type="catalytic activity">
    <reaction evidence="2">
        <text>N-acetylputrescine + H2O = putrescine + acetate</text>
        <dbReference type="Rhea" id="RHEA:23412"/>
        <dbReference type="ChEBI" id="CHEBI:15377"/>
        <dbReference type="ChEBI" id="CHEBI:30089"/>
        <dbReference type="ChEBI" id="CHEBI:58263"/>
        <dbReference type="ChEBI" id="CHEBI:326268"/>
        <dbReference type="EC" id="3.5.1.62"/>
    </reaction>
</comment>
<comment type="catalytic activity">
    <reaction evidence="2">
        <text>N-acetylcadaverine + H2O = cadaverine + acetate</text>
        <dbReference type="Rhea" id="RHEA:51892"/>
        <dbReference type="ChEBI" id="CHEBI:15377"/>
        <dbReference type="ChEBI" id="CHEBI:30089"/>
        <dbReference type="ChEBI" id="CHEBI:58384"/>
        <dbReference type="ChEBI" id="CHEBI:134408"/>
    </reaction>
</comment>
<comment type="catalytic activity">
    <reaction evidence="2">
        <text>N(6)-acetyl-L-lysyl-[protein] + H2O = L-lysyl-[protein] + acetate</text>
        <dbReference type="Rhea" id="RHEA:58108"/>
        <dbReference type="Rhea" id="RHEA-COMP:9752"/>
        <dbReference type="Rhea" id="RHEA-COMP:10731"/>
        <dbReference type="ChEBI" id="CHEBI:15377"/>
        <dbReference type="ChEBI" id="CHEBI:29969"/>
        <dbReference type="ChEBI" id="CHEBI:30089"/>
        <dbReference type="ChEBI" id="CHEBI:61930"/>
    </reaction>
</comment>
<comment type="subunit">
    <text evidence="2">Interacts with HDAC3. Interacts with HDAC2 and NCOR2/SMRT. Interacts with HSPA8/HSC70. Interacts with MSH2.</text>
</comment>
<comment type="subcellular location">
    <subcellularLocation>
        <location evidence="2">Cytoplasm</location>
    </subcellularLocation>
    <subcellularLocation>
        <location evidence="2">Nucleus</location>
    </subcellularLocation>
    <text evidence="2">Excluded from nucleoli.</text>
</comment>
<comment type="similarity">
    <text evidence="3">Belongs to the histone deacetylase family. HD type 2 subfamily.</text>
</comment>
<comment type="caution">
    <text evidence="2">Protein/histone deacetylase activity in vivo is uncertain. The 3D structure analysis of the zebrafish ortholog shows that a glutamate gatekeeper and a sterically constricted active site confer specificity for N(8)-acetylspermidine hydrolysis and disfavour acetyllysine hydrolysis. Supporting this observation, has been shown to exhibit only very low activity, if any, towards acetyl-lysine peptide substrates. However, histone deacetylase activity has been observed in vitro and HDAC10 has also been shown to be involved in MSH2 deacetylation.</text>
</comment>